<protein>
    <recommendedName>
        <fullName>Exosome complex component rrp4</fullName>
    </recommendedName>
    <alternativeName>
        <fullName>Ribosomal RNA-processing protein 4</fullName>
    </alternativeName>
</protein>
<feature type="chain" id="PRO_0000097454" description="Exosome complex component rrp4">
    <location>
        <begin position="1"/>
        <end position="329"/>
    </location>
</feature>
<feature type="domain" description="S1 motif">
    <location>
        <begin position="110"/>
        <end position="190"/>
    </location>
</feature>
<proteinExistence type="inferred from homology"/>
<keyword id="KW-0963">Cytoplasm</keyword>
<keyword id="KW-0271">Exosome</keyword>
<keyword id="KW-0539">Nucleus</keyword>
<keyword id="KW-1185">Reference proteome</keyword>
<keyword id="KW-0694">RNA-binding</keyword>
<keyword id="KW-0698">rRNA processing</keyword>
<name>RRP4_SCHPO</name>
<reference key="1">
    <citation type="journal article" date="2002" name="Nature">
        <title>The genome sequence of Schizosaccharomyces pombe.</title>
        <authorList>
            <person name="Wood V."/>
            <person name="Gwilliam R."/>
            <person name="Rajandream M.A."/>
            <person name="Lyne M.H."/>
            <person name="Lyne R."/>
            <person name="Stewart A."/>
            <person name="Sgouros J.G."/>
            <person name="Peat N."/>
            <person name="Hayles J."/>
            <person name="Baker S.G."/>
            <person name="Basham D."/>
            <person name="Bowman S."/>
            <person name="Brooks K."/>
            <person name="Brown D."/>
            <person name="Brown S."/>
            <person name="Chillingworth T."/>
            <person name="Churcher C.M."/>
            <person name="Collins M."/>
            <person name="Connor R."/>
            <person name="Cronin A."/>
            <person name="Davis P."/>
            <person name="Feltwell T."/>
            <person name="Fraser A."/>
            <person name="Gentles S."/>
            <person name="Goble A."/>
            <person name="Hamlin N."/>
            <person name="Harris D.E."/>
            <person name="Hidalgo J."/>
            <person name="Hodgson G."/>
            <person name="Holroyd S."/>
            <person name="Hornsby T."/>
            <person name="Howarth S."/>
            <person name="Huckle E.J."/>
            <person name="Hunt S."/>
            <person name="Jagels K."/>
            <person name="James K.D."/>
            <person name="Jones L."/>
            <person name="Jones M."/>
            <person name="Leather S."/>
            <person name="McDonald S."/>
            <person name="McLean J."/>
            <person name="Mooney P."/>
            <person name="Moule S."/>
            <person name="Mungall K.L."/>
            <person name="Murphy L.D."/>
            <person name="Niblett D."/>
            <person name="Odell C."/>
            <person name="Oliver K."/>
            <person name="O'Neil S."/>
            <person name="Pearson D."/>
            <person name="Quail M.A."/>
            <person name="Rabbinowitsch E."/>
            <person name="Rutherford K.M."/>
            <person name="Rutter S."/>
            <person name="Saunders D."/>
            <person name="Seeger K."/>
            <person name="Sharp S."/>
            <person name="Skelton J."/>
            <person name="Simmonds M.N."/>
            <person name="Squares R."/>
            <person name="Squares S."/>
            <person name="Stevens K."/>
            <person name="Taylor K."/>
            <person name="Taylor R.G."/>
            <person name="Tivey A."/>
            <person name="Walsh S.V."/>
            <person name="Warren T."/>
            <person name="Whitehead S."/>
            <person name="Woodward J.R."/>
            <person name="Volckaert G."/>
            <person name="Aert R."/>
            <person name="Robben J."/>
            <person name="Grymonprez B."/>
            <person name="Weltjens I."/>
            <person name="Vanstreels E."/>
            <person name="Rieger M."/>
            <person name="Schaefer M."/>
            <person name="Mueller-Auer S."/>
            <person name="Gabel C."/>
            <person name="Fuchs M."/>
            <person name="Duesterhoeft A."/>
            <person name="Fritzc C."/>
            <person name="Holzer E."/>
            <person name="Moestl D."/>
            <person name="Hilbert H."/>
            <person name="Borzym K."/>
            <person name="Langer I."/>
            <person name="Beck A."/>
            <person name="Lehrach H."/>
            <person name="Reinhardt R."/>
            <person name="Pohl T.M."/>
            <person name="Eger P."/>
            <person name="Zimmermann W."/>
            <person name="Wedler H."/>
            <person name="Wambutt R."/>
            <person name="Purnelle B."/>
            <person name="Goffeau A."/>
            <person name="Cadieu E."/>
            <person name="Dreano S."/>
            <person name="Gloux S."/>
            <person name="Lelaure V."/>
            <person name="Mottier S."/>
            <person name="Galibert F."/>
            <person name="Aves S.J."/>
            <person name="Xiang Z."/>
            <person name="Hunt C."/>
            <person name="Moore K."/>
            <person name="Hurst S.M."/>
            <person name="Lucas M."/>
            <person name="Rochet M."/>
            <person name="Gaillardin C."/>
            <person name="Tallada V.A."/>
            <person name="Garzon A."/>
            <person name="Thode G."/>
            <person name="Daga R.R."/>
            <person name="Cruzado L."/>
            <person name="Jimenez J."/>
            <person name="Sanchez M."/>
            <person name="del Rey F."/>
            <person name="Benito J."/>
            <person name="Dominguez A."/>
            <person name="Revuelta J.L."/>
            <person name="Moreno S."/>
            <person name="Armstrong J."/>
            <person name="Forsburg S.L."/>
            <person name="Cerutti L."/>
            <person name="Lowe T."/>
            <person name="McCombie W.R."/>
            <person name="Paulsen I."/>
            <person name="Potashkin J."/>
            <person name="Shpakovski G.V."/>
            <person name="Ussery D."/>
            <person name="Barrell B.G."/>
            <person name="Nurse P."/>
        </authorList>
    </citation>
    <scope>NUCLEOTIDE SEQUENCE [LARGE SCALE GENOMIC DNA]</scope>
    <source>
        <strain>972 / ATCC 24843</strain>
    </source>
</reference>
<reference key="2">
    <citation type="journal article" date="2006" name="Nat. Biotechnol.">
        <title>ORFeome cloning and global analysis of protein localization in the fission yeast Schizosaccharomyces pombe.</title>
        <authorList>
            <person name="Matsuyama A."/>
            <person name="Arai R."/>
            <person name="Yashiroda Y."/>
            <person name="Shirai A."/>
            <person name="Kamata A."/>
            <person name="Sekido S."/>
            <person name="Kobayashi Y."/>
            <person name="Hashimoto A."/>
            <person name="Hamamoto M."/>
            <person name="Hiraoka Y."/>
            <person name="Horinouchi S."/>
            <person name="Yoshida M."/>
        </authorList>
    </citation>
    <scope>SUBCELLULAR LOCATION [LARGE SCALE ANALYSIS]</scope>
</reference>
<gene>
    <name type="primary">rrp4</name>
    <name type="ORF">SPAC2F7.14c</name>
</gene>
<organism>
    <name type="scientific">Schizosaccharomyces pombe (strain 972 / ATCC 24843)</name>
    <name type="common">Fission yeast</name>
    <dbReference type="NCBI Taxonomy" id="284812"/>
    <lineage>
        <taxon>Eukaryota</taxon>
        <taxon>Fungi</taxon>
        <taxon>Dikarya</taxon>
        <taxon>Ascomycota</taxon>
        <taxon>Taphrinomycotina</taxon>
        <taxon>Schizosaccharomycetes</taxon>
        <taxon>Schizosaccharomycetales</taxon>
        <taxon>Schizosaccharomycetaceae</taxon>
        <taxon>Schizosaccharomyces</taxon>
    </lineage>
</organism>
<evidence type="ECO:0000250" key="1">
    <source>
        <dbReference type="UniProtKB" id="P38792"/>
    </source>
</evidence>
<evidence type="ECO:0000269" key="2">
    <source>
    </source>
</evidence>
<evidence type="ECO:0000305" key="3"/>
<dbReference type="EMBL" id="CU329670">
    <property type="protein sequence ID" value="CAA90501.1"/>
    <property type="molecule type" value="Genomic_DNA"/>
</dbReference>
<dbReference type="PIR" id="T38562">
    <property type="entry name" value="S58158"/>
</dbReference>
<dbReference type="RefSeq" id="NP_592984.1">
    <property type="nucleotide sequence ID" value="NM_001018384.2"/>
</dbReference>
<dbReference type="SMR" id="Q09704"/>
<dbReference type="BioGRID" id="278304">
    <property type="interactions" value="261"/>
</dbReference>
<dbReference type="ComplexPortal" id="CPX-8914">
    <property type="entry name" value="Nucleolar exosome complex"/>
</dbReference>
<dbReference type="FunCoup" id="Q09704">
    <property type="interactions" value="903"/>
</dbReference>
<dbReference type="STRING" id="284812.Q09704"/>
<dbReference type="iPTMnet" id="Q09704"/>
<dbReference type="PaxDb" id="4896-SPAC2F7.14c.1"/>
<dbReference type="EnsemblFungi" id="SPAC2F7.14c.1">
    <property type="protein sequence ID" value="SPAC2F7.14c.1:pep"/>
    <property type="gene ID" value="SPAC2F7.14c"/>
</dbReference>
<dbReference type="GeneID" id="2541813"/>
<dbReference type="KEGG" id="spo:2541813"/>
<dbReference type="PomBase" id="SPAC2F7.14c">
    <property type="gene designation" value="rrp4"/>
</dbReference>
<dbReference type="VEuPathDB" id="FungiDB:SPAC2F7.14c"/>
<dbReference type="eggNOG" id="KOG3013">
    <property type="taxonomic scope" value="Eukaryota"/>
</dbReference>
<dbReference type="HOGENOM" id="CLU_034114_0_0_1"/>
<dbReference type="InParanoid" id="Q09704"/>
<dbReference type="OMA" id="GVNGFIW"/>
<dbReference type="PhylomeDB" id="Q09704"/>
<dbReference type="Reactome" id="R-SPO-429958">
    <property type="pathway name" value="mRNA decay by 3' to 5' exoribonuclease"/>
</dbReference>
<dbReference type="Reactome" id="R-SPO-6791226">
    <property type="pathway name" value="Major pathway of rRNA processing in the nucleolus and cytosol"/>
</dbReference>
<dbReference type="PRO" id="PR:Q09704"/>
<dbReference type="Proteomes" id="UP000002485">
    <property type="component" value="Chromosome I"/>
</dbReference>
<dbReference type="GO" id="GO:0000785">
    <property type="term" value="C:chromatin"/>
    <property type="evidence" value="ECO:0000314"/>
    <property type="project" value="PomBase"/>
</dbReference>
<dbReference type="GO" id="GO:0000177">
    <property type="term" value="C:cytoplasmic exosome (RNase complex)"/>
    <property type="evidence" value="ECO:0000318"/>
    <property type="project" value="GO_Central"/>
</dbReference>
<dbReference type="GO" id="GO:0005829">
    <property type="term" value="C:cytosol"/>
    <property type="evidence" value="ECO:0007005"/>
    <property type="project" value="PomBase"/>
</dbReference>
<dbReference type="GO" id="GO:0000178">
    <property type="term" value="C:exosome (RNase complex)"/>
    <property type="evidence" value="ECO:0000314"/>
    <property type="project" value="PomBase"/>
</dbReference>
<dbReference type="GO" id="GO:0000176">
    <property type="term" value="C:nuclear exosome (RNase complex)"/>
    <property type="evidence" value="ECO:0000269"/>
    <property type="project" value="PomBase"/>
</dbReference>
<dbReference type="GO" id="GO:0005634">
    <property type="term" value="C:nucleus"/>
    <property type="evidence" value="ECO:0007005"/>
    <property type="project" value="PomBase"/>
</dbReference>
<dbReference type="GO" id="GO:0003723">
    <property type="term" value="F:RNA binding"/>
    <property type="evidence" value="ECO:0000318"/>
    <property type="project" value="GO_Central"/>
</dbReference>
<dbReference type="GO" id="GO:0071034">
    <property type="term" value="P:CUT catabolic process"/>
    <property type="evidence" value="ECO:0000318"/>
    <property type="project" value="GO_Central"/>
</dbReference>
<dbReference type="GO" id="GO:0000467">
    <property type="term" value="P:exonucleolytic trimming to generate mature 3'-end of 5.8S rRNA from tricistronic rRNA transcript (SSU-rRNA, 5.8S rRNA, LSU-rRNA)"/>
    <property type="evidence" value="ECO:0000318"/>
    <property type="project" value="GO_Central"/>
</dbReference>
<dbReference type="GO" id="GO:0070651">
    <property type="term" value="P:nonfunctional rRNA decay"/>
    <property type="evidence" value="ECO:0000266"/>
    <property type="project" value="PomBase"/>
</dbReference>
<dbReference type="GO" id="GO:0071028">
    <property type="term" value="P:nuclear mRNA surveillance"/>
    <property type="evidence" value="ECO:0000304"/>
    <property type="project" value="PomBase"/>
</dbReference>
<dbReference type="GO" id="GO:0071042">
    <property type="term" value="P:nuclear polyadenylation-dependent mRNA catabolic process"/>
    <property type="evidence" value="ECO:0000266"/>
    <property type="project" value="PomBase"/>
</dbReference>
<dbReference type="GO" id="GO:0071035">
    <property type="term" value="P:nuclear polyadenylation-dependent rRNA catabolic process"/>
    <property type="evidence" value="ECO:0000318"/>
    <property type="project" value="GO_Central"/>
</dbReference>
<dbReference type="GO" id="GO:0000956">
    <property type="term" value="P:nuclear-transcribed mRNA catabolic process"/>
    <property type="evidence" value="ECO:0000318"/>
    <property type="project" value="GO_Central"/>
</dbReference>
<dbReference type="GO" id="GO:0070478">
    <property type="term" value="P:nuclear-transcribed mRNA catabolic process, 3'-5' exonucleolytic nonsense-mediated decay"/>
    <property type="evidence" value="ECO:0000266"/>
    <property type="project" value="PomBase"/>
</dbReference>
<dbReference type="GO" id="GO:0070481">
    <property type="term" value="P:nuclear-transcribed mRNA catabolic process, non-stop decay"/>
    <property type="evidence" value="ECO:0000266"/>
    <property type="project" value="PomBase"/>
</dbReference>
<dbReference type="GO" id="GO:0071051">
    <property type="term" value="P:poly(A)-dependent snoRNA 3'-end processing"/>
    <property type="evidence" value="ECO:0000318"/>
    <property type="project" value="GO_Central"/>
</dbReference>
<dbReference type="GO" id="GO:0071038">
    <property type="term" value="P:TRAMP-dependent tRNA surveillance pathway"/>
    <property type="evidence" value="ECO:0000318"/>
    <property type="project" value="GO_Central"/>
</dbReference>
<dbReference type="GO" id="GO:0034475">
    <property type="term" value="P:U4 snRNA 3'-end processing"/>
    <property type="evidence" value="ECO:0000318"/>
    <property type="project" value="GO_Central"/>
</dbReference>
<dbReference type="CDD" id="cd22525">
    <property type="entry name" value="KH-I_Rrp4_eukar"/>
    <property type="match status" value="1"/>
</dbReference>
<dbReference type="CDD" id="cd05789">
    <property type="entry name" value="S1_Rrp4"/>
    <property type="match status" value="1"/>
</dbReference>
<dbReference type="FunFam" id="2.40.50.140:FF:000038">
    <property type="entry name" value="Exosome complex component RRP4"/>
    <property type="match status" value="1"/>
</dbReference>
<dbReference type="Gene3D" id="2.40.50.100">
    <property type="match status" value="1"/>
</dbReference>
<dbReference type="Gene3D" id="2.40.50.140">
    <property type="entry name" value="Nucleic acid-binding proteins"/>
    <property type="match status" value="1"/>
</dbReference>
<dbReference type="InterPro" id="IPR025721">
    <property type="entry name" value="Exosome_cplx_N_dom"/>
</dbReference>
<dbReference type="InterPro" id="IPR026699">
    <property type="entry name" value="Exosome_RNA_bind1/RRP40/RRP4"/>
</dbReference>
<dbReference type="InterPro" id="IPR004088">
    <property type="entry name" value="KH_dom_type_1"/>
</dbReference>
<dbReference type="InterPro" id="IPR036612">
    <property type="entry name" value="KH_dom_type_1_sf"/>
</dbReference>
<dbReference type="InterPro" id="IPR012340">
    <property type="entry name" value="NA-bd_OB-fold"/>
</dbReference>
<dbReference type="InterPro" id="IPR048565">
    <property type="entry name" value="RRP4_S1"/>
</dbReference>
<dbReference type="InterPro" id="IPR003029">
    <property type="entry name" value="S1_domain"/>
</dbReference>
<dbReference type="PANTHER" id="PTHR21321:SF4">
    <property type="entry name" value="EXOSOME COMPLEX COMPONENT RRP4"/>
    <property type="match status" value="1"/>
</dbReference>
<dbReference type="PANTHER" id="PTHR21321">
    <property type="entry name" value="PNAS-3 RELATED"/>
    <property type="match status" value="1"/>
</dbReference>
<dbReference type="Pfam" id="PF14382">
    <property type="entry name" value="ECR1_N"/>
    <property type="match status" value="1"/>
</dbReference>
<dbReference type="Pfam" id="PF15985">
    <property type="entry name" value="KH_6"/>
    <property type="match status" value="1"/>
</dbReference>
<dbReference type="Pfam" id="PF21266">
    <property type="entry name" value="RRP4_S1"/>
    <property type="match status" value="1"/>
</dbReference>
<dbReference type="SMART" id="SM00316">
    <property type="entry name" value="S1"/>
    <property type="match status" value="1"/>
</dbReference>
<dbReference type="SUPFAM" id="SSF54791">
    <property type="entry name" value="Eukaryotic type KH-domain (KH-domain type I)"/>
    <property type="match status" value="1"/>
</dbReference>
<dbReference type="SUPFAM" id="SSF50249">
    <property type="entry name" value="Nucleic acid-binding proteins"/>
    <property type="match status" value="1"/>
</dbReference>
<dbReference type="SUPFAM" id="SSF110324">
    <property type="entry name" value="Ribosomal L27 protein-like"/>
    <property type="match status" value="1"/>
</dbReference>
<comment type="function">
    <text evidence="1">Non-catalytic component of the RNA exosome complex which has 3'-&gt;5' exoribonuclease activity and participates in a multitude of cellular RNA processing and degradation events. In the nucleus, the RNA exosome complex is involved in proper maturation of stable RNA species such as rRNA, snRNA and snoRNA, in the elimination of RNA processing by-products and non-coding 'pervasive' transcripts, such as antisense RNA species and cryptic unstable transcripts (CUTs), and of mRNAs with processing defects, thereby limiting or excluding their export to the cytoplasm. In the cytoplasm, the RNA exosome complex is involved in general mRNA turnover and in RNA surveillance pathways, preventing translation of aberrant mRNAs. The catalytic inactive RNA exosome core complex of 9 subunits (Exo-9) is proposed to play a pivotal role in the binding and presentation of RNA for ribonucleolysis, and to serve as a scaffold for the association with catalytic subunits and accessory proteins or complexes. rrp4 as peripheral part of the Exo-9 complex is thought to stabilize the hexameric ring of RNase PH-domain subunits (By similarity).</text>
</comment>
<comment type="subunit">
    <text evidence="1">Component of the RNA exosome complex. Specifically part of the catalytically inactive RNA exosome core complex (Exo-9) which may associate with the catalytic subunits rrp6 and dis3 in cytoplasmic- and nuclear-specific RNA exosome complex forms. Exo-9 is formed by a hexameric base ring of RNase PH domain-containing subunits and a cap ring consisting of csl4, rrp4 and rrp40.</text>
</comment>
<comment type="subcellular location">
    <subcellularLocation>
        <location evidence="2">Cytoplasm</location>
    </subcellularLocation>
    <subcellularLocation>
        <location evidence="2">Nucleus</location>
    </subcellularLocation>
</comment>
<comment type="similarity">
    <text evidence="3">Belongs to the RRP4 family.</text>
</comment>
<accession>Q09704</accession>
<sequence length="329" mass="36688">MVTILKPEEFYVSSEADIVNDVSMTEMEDEIMEDEQMGLVDGEDVLEEFDKSIHQNLVTPGQLVTDDPQFMRGHGTYFEDGGIYASVAGSVQRVNKLISVKPLRSKYVPEIGDLIIGKIAEVQPKRWKVDIGAKQNAVLMLSSINLPGGIQRRKLETDELQMRSFFQEGDLLVAEVQQYFSDGSVSIHTRSLKYGKLRNGVFLKVPPALVVRSKSHAYALAGGVDIILSVNGYVWVSKHNENQHSSVSITRLEEEASESIYSNENDEIDGYTRLNISRVSICIKGLASRSLPLTQASITNFYESSLVFSNLQDLTVPKNMDQIAMEAMQ</sequence>